<feature type="chain" id="PRO_0000347444" description="Urease accessory protein UreG 2">
    <location>
        <begin position="1"/>
        <end position="236"/>
    </location>
</feature>
<feature type="region of interest" description="Disordered" evidence="2">
    <location>
        <begin position="1"/>
        <end position="40"/>
    </location>
</feature>
<feature type="binding site" evidence="1">
    <location>
        <begin position="43"/>
        <end position="50"/>
    </location>
    <ligand>
        <name>GTP</name>
        <dbReference type="ChEBI" id="CHEBI:37565"/>
    </ligand>
</feature>
<protein>
    <recommendedName>
        <fullName evidence="1">Urease accessory protein UreG 2</fullName>
    </recommendedName>
</protein>
<dbReference type="EMBL" id="AM420293">
    <property type="protein sequence ID" value="CAM01816.1"/>
    <property type="molecule type" value="Genomic_DNA"/>
</dbReference>
<dbReference type="RefSeq" id="WP_009951496.1">
    <property type="nucleotide sequence ID" value="NC_009142.1"/>
</dbReference>
<dbReference type="SMR" id="A4FCP1"/>
<dbReference type="STRING" id="405948.SACE_2524"/>
<dbReference type="KEGG" id="sen:SACE_2524"/>
<dbReference type="eggNOG" id="COG0378">
    <property type="taxonomic scope" value="Bacteria"/>
</dbReference>
<dbReference type="HOGENOM" id="CLU_072144_1_0_11"/>
<dbReference type="Proteomes" id="UP000006728">
    <property type="component" value="Chromosome"/>
</dbReference>
<dbReference type="GO" id="GO:0005737">
    <property type="term" value="C:cytoplasm"/>
    <property type="evidence" value="ECO:0007669"/>
    <property type="project" value="UniProtKB-SubCell"/>
</dbReference>
<dbReference type="GO" id="GO:0005525">
    <property type="term" value="F:GTP binding"/>
    <property type="evidence" value="ECO:0007669"/>
    <property type="project" value="UniProtKB-KW"/>
</dbReference>
<dbReference type="GO" id="GO:0003924">
    <property type="term" value="F:GTPase activity"/>
    <property type="evidence" value="ECO:0007669"/>
    <property type="project" value="InterPro"/>
</dbReference>
<dbReference type="GO" id="GO:0016151">
    <property type="term" value="F:nickel cation binding"/>
    <property type="evidence" value="ECO:0007669"/>
    <property type="project" value="UniProtKB-UniRule"/>
</dbReference>
<dbReference type="GO" id="GO:0043419">
    <property type="term" value="P:urea catabolic process"/>
    <property type="evidence" value="ECO:0007669"/>
    <property type="project" value="InterPro"/>
</dbReference>
<dbReference type="CDD" id="cd05540">
    <property type="entry name" value="UreG"/>
    <property type="match status" value="1"/>
</dbReference>
<dbReference type="Gene3D" id="3.40.50.300">
    <property type="entry name" value="P-loop containing nucleotide triphosphate hydrolases"/>
    <property type="match status" value="1"/>
</dbReference>
<dbReference type="HAMAP" id="MF_01389">
    <property type="entry name" value="UreG"/>
    <property type="match status" value="1"/>
</dbReference>
<dbReference type="InterPro" id="IPR003495">
    <property type="entry name" value="CobW/HypB/UreG_nucleotide-bd"/>
</dbReference>
<dbReference type="InterPro" id="IPR027417">
    <property type="entry name" value="P-loop_NTPase"/>
</dbReference>
<dbReference type="InterPro" id="IPR004400">
    <property type="entry name" value="UreG"/>
</dbReference>
<dbReference type="NCBIfam" id="TIGR00101">
    <property type="entry name" value="ureG"/>
    <property type="match status" value="1"/>
</dbReference>
<dbReference type="PANTHER" id="PTHR31715">
    <property type="entry name" value="UREASE ACCESSORY PROTEIN G"/>
    <property type="match status" value="1"/>
</dbReference>
<dbReference type="PANTHER" id="PTHR31715:SF0">
    <property type="entry name" value="UREASE ACCESSORY PROTEIN G"/>
    <property type="match status" value="1"/>
</dbReference>
<dbReference type="Pfam" id="PF02492">
    <property type="entry name" value="cobW"/>
    <property type="match status" value="1"/>
</dbReference>
<dbReference type="PIRSF" id="PIRSF005624">
    <property type="entry name" value="Ni-bind_GTPase"/>
    <property type="match status" value="1"/>
</dbReference>
<dbReference type="SUPFAM" id="SSF52540">
    <property type="entry name" value="P-loop containing nucleoside triphosphate hydrolases"/>
    <property type="match status" value="1"/>
</dbReference>
<evidence type="ECO:0000255" key="1">
    <source>
        <dbReference type="HAMAP-Rule" id="MF_01389"/>
    </source>
</evidence>
<evidence type="ECO:0000256" key="2">
    <source>
        <dbReference type="SAM" id="MobiDB-lite"/>
    </source>
</evidence>
<name>UREG2_SACEN</name>
<proteinExistence type="inferred from homology"/>
<keyword id="KW-0143">Chaperone</keyword>
<keyword id="KW-0963">Cytoplasm</keyword>
<keyword id="KW-0342">GTP-binding</keyword>
<keyword id="KW-0996">Nickel insertion</keyword>
<keyword id="KW-0547">Nucleotide-binding</keyword>
<keyword id="KW-1185">Reference proteome</keyword>
<comment type="function">
    <text evidence="1">Facilitates the functional incorporation of the urease nickel metallocenter. This process requires GTP hydrolysis, probably effectuated by UreG.</text>
</comment>
<comment type="subunit">
    <text evidence="1">Homodimer. UreD, UreF and UreG form a complex that acts as a GTP-hydrolysis-dependent molecular chaperone, activating the urease apoprotein by helping to assemble the nickel containing metallocenter of UreC. The UreE protein probably delivers the nickel.</text>
</comment>
<comment type="subcellular location">
    <subcellularLocation>
        <location evidence="1">Cytoplasm</location>
    </subcellularLocation>
</comment>
<comment type="similarity">
    <text evidence="1">Belongs to the SIMIBI class G3E GTPase family. UreG subfamily.</text>
</comment>
<reference key="1">
    <citation type="journal article" date="2007" name="Nat. Biotechnol.">
        <title>Complete genome sequence of the erythromycin-producing bacterium Saccharopolyspora erythraea NRRL23338.</title>
        <authorList>
            <person name="Oliynyk M."/>
            <person name="Samborskyy M."/>
            <person name="Lester J.B."/>
            <person name="Mironenko T."/>
            <person name="Scott N."/>
            <person name="Dickens S."/>
            <person name="Haydock S.F."/>
            <person name="Leadlay P.F."/>
        </authorList>
    </citation>
    <scope>NUCLEOTIDE SEQUENCE [LARGE SCALE GENOMIC DNA]</scope>
    <source>
        <strain>ATCC 11635 / DSM 40517 / JCM 4748 / NBRC 13426 / NCIMB 8594 / NRRL 2338</strain>
    </source>
</reference>
<accession>A4FCP1</accession>
<sequence>MEASVHIGNSVPHAHLHSAAPARPADPVRPDGSRRALRIGLGGPVGSGKTATVAALCRALRDRLSIAVVTNDIYTREDADFLLRHAILPAERILAVETGACPHTAIRDDISANLEAVEQLEATVGPLDLILVESGGDNLTATFSKGLVDAQIFVIDVAGGDDIPRKGGPGITTADLLVINKTDLAPHVGSDLQAMAADAKRQRGERPVAFTSLTADNGVGPVADWVGARLTAWTAA</sequence>
<gene>
    <name evidence="1" type="primary">ureG2</name>
    <name type="ordered locus">SACE_2524</name>
</gene>
<organism>
    <name type="scientific">Saccharopolyspora erythraea (strain ATCC 11635 / DSM 40517 / JCM 4748 / NBRC 13426 / NCIMB 8594 / NRRL 2338)</name>
    <dbReference type="NCBI Taxonomy" id="405948"/>
    <lineage>
        <taxon>Bacteria</taxon>
        <taxon>Bacillati</taxon>
        <taxon>Actinomycetota</taxon>
        <taxon>Actinomycetes</taxon>
        <taxon>Pseudonocardiales</taxon>
        <taxon>Pseudonocardiaceae</taxon>
        <taxon>Saccharopolyspora</taxon>
    </lineage>
</organism>